<comment type="function">
    <text evidence="1">F(1)F(0) ATP synthase produces ATP from ADP in the presence of a proton or sodium gradient. F-type ATPases consist of two structural domains, F(1) containing the extramembraneous catalytic core and F(0) containing the membrane proton channel, linked together by a central stalk and a peripheral stalk. During catalysis, ATP synthesis in the catalytic domain of F(1) is coupled via a rotary mechanism of the central stalk subunits to proton translocation.</text>
</comment>
<comment type="function">
    <text evidence="1">Component of the F(0) channel, it forms part of the peripheral stalk, linking F(1) to F(0).</text>
</comment>
<comment type="subunit">
    <text evidence="1">F-type ATPases have 2 components, F(1) - the catalytic core - and F(0) - the membrane proton channel. F(1) has five subunits: alpha(3), beta(3), gamma(1), delta(1), epsilon(1). F(0) has four main subunits: a(1), b(1), b'(1) and c(10-14). The alpha and beta chains form an alternating ring which encloses part of the gamma chain. F(1) is attached to F(0) by a central stalk formed by the gamma and epsilon chains, while a peripheral stalk is formed by the delta, b and b' chains.</text>
</comment>
<comment type="subcellular location">
    <subcellularLocation>
        <location evidence="1">Plastid</location>
        <location evidence="1">Chloroplast thylakoid membrane</location>
        <topology evidence="1">Single-pass membrane protein</topology>
    </subcellularLocation>
</comment>
<comment type="miscellaneous">
    <text>In plastids the F-type ATPase is also known as CF(1)CF(0).</text>
</comment>
<comment type="similarity">
    <text evidence="1">Belongs to the ATPase B chain family.</text>
</comment>
<proteinExistence type="inferred from homology"/>
<organism>
    <name type="scientific">Lactuca sativa</name>
    <name type="common">Garden lettuce</name>
    <dbReference type="NCBI Taxonomy" id="4236"/>
    <lineage>
        <taxon>Eukaryota</taxon>
        <taxon>Viridiplantae</taxon>
        <taxon>Streptophyta</taxon>
        <taxon>Embryophyta</taxon>
        <taxon>Tracheophyta</taxon>
        <taxon>Spermatophyta</taxon>
        <taxon>Magnoliopsida</taxon>
        <taxon>eudicotyledons</taxon>
        <taxon>Gunneridae</taxon>
        <taxon>Pentapetalae</taxon>
        <taxon>asterids</taxon>
        <taxon>campanulids</taxon>
        <taxon>Asterales</taxon>
        <taxon>Asteraceae</taxon>
        <taxon>Cichorioideae</taxon>
        <taxon>Cichorieae</taxon>
        <taxon>Lactucinae</taxon>
        <taxon>Lactuca</taxon>
    </lineage>
</organism>
<sequence length="184" mass="20772">MKNVTDSFVSLGHWPSAGSFGFNTDILATNLINLSVVLGVLIFFGKGVLSDLLDNRKQRILNTIRNSEELREGAIEQLEKARARLRKVEIEADQFRVNGYSEIEREKLNLIDSTYKTLEQLENYKNETINFEQQKASNQVRQRVFQQALQGALGTLNSCLNSELHLRTISANIGILGAMKEITD</sequence>
<name>ATPF_LACSA</name>
<gene>
    <name evidence="1" type="primary">atpF</name>
    <name type="ORF">PSC018</name>
</gene>
<accession>Q56P07</accession>
<keyword id="KW-0066">ATP synthesis</keyword>
<keyword id="KW-0138">CF(0)</keyword>
<keyword id="KW-0150">Chloroplast</keyword>
<keyword id="KW-0375">Hydrogen ion transport</keyword>
<keyword id="KW-0406">Ion transport</keyword>
<keyword id="KW-0472">Membrane</keyword>
<keyword id="KW-0934">Plastid</keyword>
<keyword id="KW-0793">Thylakoid</keyword>
<keyword id="KW-0812">Transmembrane</keyword>
<keyword id="KW-1133">Transmembrane helix</keyword>
<keyword id="KW-0813">Transport</keyword>
<evidence type="ECO:0000255" key="1">
    <source>
        <dbReference type="HAMAP-Rule" id="MF_01398"/>
    </source>
</evidence>
<reference key="1">
    <citation type="journal article" date="2005" name="Mol. Biol. Evol.">
        <title>Two chloroplast DNA inversions originated simultaneously during the early evolution of the sunflower family (Asteraceae).</title>
        <authorList>
            <person name="Kim K.-J."/>
            <person name="Choi K.-S."/>
            <person name="Jansen R.K."/>
        </authorList>
    </citation>
    <scope>NUCLEOTIDE SEQUENCE [GENOMIC DNA]</scope>
</reference>
<reference key="2">
    <citation type="journal article" date="2006" name="Transgenic Res.">
        <title>Efficient and stable transformation of Lactuca sativa L. cv. Cisco (lettuce) plastids.</title>
        <authorList>
            <person name="Kanamoto H."/>
            <person name="Yamashita A."/>
            <person name="Asao H."/>
            <person name="Okumura S."/>
            <person name="Takase H."/>
            <person name="Hattori M."/>
            <person name="Yokota A."/>
            <person name="Tomizawa K."/>
        </authorList>
    </citation>
    <scope>NUCLEOTIDE SEQUENCE [LARGE SCALE GENOMIC DNA]</scope>
    <source>
        <strain>cv. Cisco</strain>
    </source>
</reference>
<reference key="3">
    <citation type="submission" date="2006-01" db="EMBL/GenBank/DDBJ databases">
        <title>A comparison of the first two published chloroplast genomes in Asteraceae: Lactuca and Helianthus.</title>
        <authorList>
            <person name="Timme R.E."/>
            <person name="Kuehl J.V."/>
            <person name="Boore J.L."/>
            <person name="Jansen R.K."/>
        </authorList>
    </citation>
    <scope>NUCLEOTIDE SEQUENCE [LARGE SCALE GENOMIC DNA]</scope>
    <source>
        <strain>cv. Salinas</strain>
    </source>
</reference>
<protein>
    <recommendedName>
        <fullName evidence="1">ATP synthase subunit b, chloroplastic</fullName>
    </recommendedName>
    <alternativeName>
        <fullName evidence="1">ATP synthase F(0) sector subunit b</fullName>
    </alternativeName>
    <alternativeName>
        <fullName evidence="1">ATPase subunit I</fullName>
    </alternativeName>
</protein>
<geneLocation type="chloroplast"/>
<feature type="chain" id="PRO_0000368944" description="ATP synthase subunit b, chloroplastic">
    <location>
        <begin position="1"/>
        <end position="184"/>
    </location>
</feature>
<feature type="transmembrane region" description="Helical" evidence="1">
    <location>
        <begin position="27"/>
        <end position="49"/>
    </location>
</feature>
<dbReference type="EMBL" id="AY865171">
    <property type="protein sequence ID" value="AAX58148.1"/>
    <property type="molecule type" value="Genomic_DNA"/>
</dbReference>
<dbReference type="EMBL" id="DQ383816">
    <property type="protein sequence ID" value="ABD47226.1"/>
    <property type="molecule type" value="Genomic_DNA"/>
</dbReference>
<dbReference type="EMBL" id="AP007232">
    <property type="protein sequence ID" value="BAE47587.1"/>
    <property type="molecule type" value="Genomic_DNA"/>
</dbReference>
<dbReference type="RefSeq" id="YP_398322.1">
    <property type="nucleotide sequence ID" value="NC_007578.1"/>
</dbReference>
<dbReference type="SMR" id="Q56P07"/>
<dbReference type="GeneID" id="3772897"/>
<dbReference type="KEGG" id="lsv:3772897"/>
<dbReference type="OrthoDB" id="1900203at2759"/>
<dbReference type="GO" id="GO:0009535">
    <property type="term" value="C:chloroplast thylakoid membrane"/>
    <property type="evidence" value="ECO:0007669"/>
    <property type="project" value="UniProtKB-SubCell"/>
</dbReference>
<dbReference type="GO" id="GO:0045259">
    <property type="term" value="C:proton-transporting ATP synthase complex"/>
    <property type="evidence" value="ECO:0007669"/>
    <property type="project" value="UniProtKB-KW"/>
</dbReference>
<dbReference type="GO" id="GO:0046933">
    <property type="term" value="F:proton-transporting ATP synthase activity, rotational mechanism"/>
    <property type="evidence" value="ECO:0007669"/>
    <property type="project" value="UniProtKB-UniRule"/>
</dbReference>
<dbReference type="CDD" id="cd06503">
    <property type="entry name" value="ATP-synt_Fo_b"/>
    <property type="match status" value="1"/>
</dbReference>
<dbReference type="HAMAP" id="MF_01398">
    <property type="entry name" value="ATP_synth_b_bprime"/>
    <property type="match status" value="1"/>
</dbReference>
<dbReference type="InterPro" id="IPR002146">
    <property type="entry name" value="ATP_synth_b/b'su_bac/chlpt"/>
</dbReference>
<dbReference type="PANTHER" id="PTHR34264">
    <property type="entry name" value="ATP SYNTHASE SUBUNIT B, CHLOROPLASTIC"/>
    <property type="match status" value="1"/>
</dbReference>
<dbReference type="PANTHER" id="PTHR34264:SF3">
    <property type="entry name" value="ATP SYNTHASE SUBUNIT B, CHLOROPLASTIC"/>
    <property type="match status" value="1"/>
</dbReference>
<dbReference type="Pfam" id="PF00430">
    <property type="entry name" value="ATP-synt_B"/>
    <property type="match status" value="1"/>
</dbReference>